<dbReference type="EMBL" id="BC087073">
    <property type="protein sequence ID" value="AAH87073.1"/>
    <property type="molecule type" value="mRNA"/>
</dbReference>
<dbReference type="RefSeq" id="NP_001012154.1">
    <property type="nucleotide sequence ID" value="NM_001012154.1"/>
</dbReference>
<dbReference type="RefSeq" id="XP_006251404.1">
    <property type="nucleotide sequence ID" value="XM_006251342.3"/>
</dbReference>
<dbReference type="RefSeq" id="XP_006251405.1">
    <property type="nucleotide sequence ID" value="XM_006251343.5"/>
</dbReference>
<dbReference type="RefSeq" id="XP_038948151.1">
    <property type="nucleotide sequence ID" value="XM_039092223.2"/>
</dbReference>
<dbReference type="SMR" id="Q5M9G9"/>
<dbReference type="FunCoup" id="Q5M9G9">
    <property type="interactions" value="2222"/>
</dbReference>
<dbReference type="IntAct" id="Q5M9G9">
    <property type="interactions" value="2"/>
</dbReference>
<dbReference type="STRING" id="10116.ENSRNOP00000074223"/>
<dbReference type="iPTMnet" id="Q5M9G9"/>
<dbReference type="PhosphoSitePlus" id="Q5M9G9"/>
<dbReference type="jPOST" id="Q5M9G9"/>
<dbReference type="PaxDb" id="10116-ENSRNOP00000053972"/>
<dbReference type="Ensembl" id="ENSRNOT00000089133.2">
    <property type="protein sequence ID" value="ENSRNOP00000074223.1"/>
    <property type="gene ID" value="ENSRNOG00000052477.2"/>
</dbReference>
<dbReference type="GeneID" id="360977"/>
<dbReference type="KEGG" id="rno:360977"/>
<dbReference type="UCSC" id="RGD:1309737">
    <property type="organism name" value="rat"/>
</dbReference>
<dbReference type="AGR" id="RGD:1309737"/>
<dbReference type="CTD" id="9238"/>
<dbReference type="RGD" id="1309737">
    <property type="gene designation" value="Tbrg4"/>
</dbReference>
<dbReference type="eggNOG" id="ENOG502QTRE">
    <property type="taxonomic scope" value="Eukaryota"/>
</dbReference>
<dbReference type="GeneTree" id="ENSGT01030000234607"/>
<dbReference type="HOGENOM" id="CLU_029448_0_0_1"/>
<dbReference type="InParanoid" id="Q5M9G9"/>
<dbReference type="OMA" id="LCILQQA"/>
<dbReference type="OrthoDB" id="6501018at2759"/>
<dbReference type="PhylomeDB" id="Q5M9G9"/>
<dbReference type="TreeFam" id="TF324885"/>
<dbReference type="PRO" id="PR:Q5M9G9"/>
<dbReference type="Proteomes" id="UP000002494">
    <property type="component" value="Chromosome 14"/>
</dbReference>
<dbReference type="Bgee" id="ENSRNOG00000052477">
    <property type="expression patterns" value="Expressed in duodenum and 19 other cell types or tissues"/>
</dbReference>
<dbReference type="GO" id="GO:0005759">
    <property type="term" value="C:mitochondrial matrix"/>
    <property type="evidence" value="ECO:0000250"/>
    <property type="project" value="UniProtKB"/>
</dbReference>
<dbReference type="GO" id="GO:0005739">
    <property type="term" value="C:mitochondrion"/>
    <property type="evidence" value="ECO:0000250"/>
    <property type="project" value="UniProtKB"/>
</dbReference>
<dbReference type="GO" id="GO:0035770">
    <property type="term" value="C:ribonucleoprotein granule"/>
    <property type="evidence" value="ECO:0000318"/>
    <property type="project" value="GO_Central"/>
</dbReference>
<dbReference type="GO" id="GO:0003723">
    <property type="term" value="F:RNA binding"/>
    <property type="evidence" value="ECO:0000318"/>
    <property type="project" value="GO_Central"/>
</dbReference>
<dbReference type="GO" id="GO:0090615">
    <property type="term" value="P:mitochondrial mRNA processing"/>
    <property type="evidence" value="ECO:0000250"/>
    <property type="project" value="UniProtKB"/>
</dbReference>
<dbReference type="GO" id="GO:0000963">
    <property type="term" value="P:mitochondrial RNA processing"/>
    <property type="evidence" value="ECO:0000318"/>
    <property type="project" value="GO_Central"/>
</dbReference>
<dbReference type="GO" id="GO:0016071">
    <property type="term" value="P:mRNA metabolic process"/>
    <property type="evidence" value="ECO:0000250"/>
    <property type="project" value="UniProtKB"/>
</dbReference>
<dbReference type="GO" id="GO:0044528">
    <property type="term" value="P:regulation of mitochondrial mRNA stability"/>
    <property type="evidence" value="ECO:0000250"/>
    <property type="project" value="UniProtKB"/>
</dbReference>
<dbReference type="CDD" id="cd23739">
    <property type="entry name" value="TBRG4-like_N"/>
    <property type="match status" value="1"/>
</dbReference>
<dbReference type="InterPro" id="IPR013579">
    <property type="entry name" value="FAST_2"/>
</dbReference>
<dbReference type="InterPro" id="IPR050870">
    <property type="entry name" value="FAST_kinase"/>
</dbReference>
<dbReference type="InterPro" id="IPR010622">
    <property type="entry name" value="FAST_Leu-rich"/>
</dbReference>
<dbReference type="InterPro" id="IPR013584">
    <property type="entry name" value="RAP"/>
</dbReference>
<dbReference type="PANTHER" id="PTHR21228:SF59">
    <property type="entry name" value="FAST KINASE DOMAIN-CONTAINING PROTEIN 4"/>
    <property type="match status" value="1"/>
</dbReference>
<dbReference type="PANTHER" id="PTHR21228">
    <property type="entry name" value="FAST LEU-RICH DOMAIN-CONTAINING"/>
    <property type="match status" value="1"/>
</dbReference>
<dbReference type="Pfam" id="PF06743">
    <property type="entry name" value="FAST_1"/>
    <property type="match status" value="1"/>
</dbReference>
<dbReference type="Pfam" id="PF08368">
    <property type="entry name" value="FAST_2"/>
    <property type="match status" value="1"/>
</dbReference>
<dbReference type="Pfam" id="PF08373">
    <property type="entry name" value="RAP"/>
    <property type="match status" value="1"/>
</dbReference>
<dbReference type="SMART" id="SM00952">
    <property type="entry name" value="RAP"/>
    <property type="match status" value="1"/>
</dbReference>
<dbReference type="PROSITE" id="PS51286">
    <property type="entry name" value="RAP"/>
    <property type="match status" value="1"/>
</dbReference>
<name>FAKD4_RAT</name>
<reference key="1">
    <citation type="journal article" date="2004" name="Genome Res.">
        <title>The status, quality, and expansion of the NIH full-length cDNA project: the Mammalian Gene Collection (MGC).</title>
        <authorList>
            <consortium name="The MGC Project Team"/>
        </authorList>
    </citation>
    <scope>NUCLEOTIDE SEQUENCE [LARGE SCALE MRNA]</scope>
    <source>
        <tissue>Testis</tissue>
    </source>
</reference>
<sequence length="629" mass="71181">MAVRLMKQCTCLLREATRLVPTVAPVGRLRLAGVACKTLTSSVSSPSSGSLTELLGKEQVFTPYPEHQEVDYLIEKATRPEELLELLGGDHSLHHNHAALILIRLSYLLSEKPKEKALLVEDARFQQLVRLVDSQITSVWHGTLVKLLRSLYTLVLPQGSKELRSVEQEVRWRLRRLKYKHLVFLAESCAPFMKEQHSKELLAELLRHLERRWTEISDSRTLVSMMTMAGHLSESLMNRLEDKCLELVEQFGPDELRKVLMTLAAQSRRSVPLLRAISYHLVQKPFPMTKGMLLDLAYAYGKLSFHQTQVAQRLAADLLPFIPSMTPGEVARCAKSFAFLKWLNLPLFEAFTQHLLNSAQDVSLSHLCSVLLAFARLNFHPEQEDQFFNLVHEKLDSVLGSLEPALQVDLVWALCVLQQVQVAELQTVLHPGLHTRFLESKSPKDQSTFQKLVHINSTALLEYPEYKGPFLPASAVAPSPSPSNKKMTPLQKELQDALKALLGNNDTGSLEVATQYGWVLDAEVLLDAEGHFLPLRDFVAPHLAQPVGNQPLPPGAKRIAFLRWEFPNFNSRSKDLLGRFVLARRHVLAAGFLVVDVPYYEWLDLKSEWQKTAYLKDKMRKAVAEELAK</sequence>
<keyword id="KW-0496">Mitochondrion</keyword>
<keyword id="KW-1185">Reference proteome</keyword>
<keyword id="KW-0809">Transit peptide</keyword>
<gene>
    <name type="primary">Tbrg4</name>
</gene>
<proteinExistence type="evidence at transcript level"/>
<evidence type="ECO:0000250" key="1">
    <source>
        <dbReference type="UniProtKB" id="Q969Z0"/>
    </source>
</evidence>
<evidence type="ECO:0000255" key="2">
    <source>
        <dbReference type="PROSITE-ProRule" id="PRU00619"/>
    </source>
</evidence>
<evidence type="ECO:0000305" key="3"/>
<comment type="function">
    <text evidence="1">Plays a role in processing of mitochondrial RNA precursors and in stabilization of a subset of mature mitochondrial RNA species, such as MT-CO1, MT-CO2, MT-CYB, MT-CO3, MT-ND3, MT-ND5 and MT-ATP8/6. May play a role in cell cycle progression.</text>
</comment>
<comment type="subcellular location">
    <subcellularLocation>
        <location evidence="1">Mitochondrion matrix</location>
    </subcellularLocation>
</comment>
<comment type="similarity">
    <text evidence="3">Belongs to the FAST kinase family.</text>
</comment>
<organism>
    <name type="scientific">Rattus norvegicus</name>
    <name type="common">Rat</name>
    <dbReference type="NCBI Taxonomy" id="10116"/>
    <lineage>
        <taxon>Eukaryota</taxon>
        <taxon>Metazoa</taxon>
        <taxon>Chordata</taxon>
        <taxon>Craniata</taxon>
        <taxon>Vertebrata</taxon>
        <taxon>Euteleostomi</taxon>
        <taxon>Mammalia</taxon>
        <taxon>Eutheria</taxon>
        <taxon>Euarchontoglires</taxon>
        <taxon>Glires</taxon>
        <taxon>Rodentia</taxon>
        <taxon>Myomorpha</taxon>
        <taxon>Muroidea</taxon>
        <taxon>Muridae</taxon>
        <taxon>Murinae</taxon>
        <taxon>Rattus</taxon>
    </lineage>
</organism>
<accession>Q5M9G9</accession>
<protein>
    <recommendedName>
        <fullName>FAST kinase domain-containing protein 4</fullName>
    </recommendedName>
    <alternativeName>
        <fullName>Protein TBRG4</fullName>
    </alternativeName>
    <alternativeName>
        <fullName>Transforming growth factor beta regulator 4</fullName>
    </alternativeName>
</protein>
<feature type="transit peptide" description="Mitochondrion" evidence="3">
    <location>
        <begin position="1"/>
        <end status="unknown"/>
    </location>
</feature>
<feature type="chain" id="PRO_0000273029" description="FAST kinase domain-containing protein 4">
    <location>
        <begin status="unknown"/>
        <end position="629"/>
    </location>
</feature>
<feature type="domain" description="RAP" evidence="2">
    <location>
        <begin position="559"/>
        <end position="617"/>
    </location>
</feature>